<protein>
    <recommendedName>
        <fullName>Acyl-coenzyme A thioesterase 9, mitochondrial</fullName>
        <shortName>Acyl-CoA thioesterase 9</shortName>
        <ecNumber evidence="2">3.1.2.-</ecNumber>
        <ecNumber evidence="2">3.1.2.2</ecNumber>
    </recommendedName>
    <alternativeName>
        <fullName>Acyl-CoA thioester hydrolase 9</fullName>
    </alternativeName>
</protein>
<keyword id="KW-0007">Acetylation</keyword>
<keyword id="KW-0025">Alternative splicing</keyword>
<keyword id="KW-0276">Fatty acid metabolism</keyword>
<keyword id="KW-0378">Hydrolase</keyword>
<keyword id="KW-0443">Lipid metabolism</keyword>
<keyword id="KW-0472">Membrane</keyword>
<keyword id="KW-0496">Mitochondrion</keyword>
<keyword id="KW-0999">Mitochondrion inner membrane</keyword>
<keyword id="KW-1267">Proteomics identification</keyword>
<keyword id="KW-1185">Reference proteome</keyword>
<keyword id="KW-0677">Repeat</keyword>
<keyword id="KW-0719">Serine esterase</keyword>
<keyword id="KW-0809">Transit peptide</keyword>
<sequence>MRRAALRLCALGKGQLTPGRGLTQGPQNPKKQGIFHIHEVRDKLREIVGASTNWRDHVKAMEERKLLHSFLAKSQDGLPPRRMKDSYIEVLLPLGSEPELREKYLTVQNTVRFGRILEDLDSLGVLICYMHNKIHSAKMSPLSIVTALVDKIDMCKKSLSPEQDIKFSGHVSWVGKTSMEVKMQMFQLHGDEFCPVLDATFVMVARDSENKGPAFVNPLIPESPEEEELFRQGELNKGRRIAFSSTSLLKMAPSAEERTTIHEMFLSTLDPKTISFRSRVLPSNAVWMENSKLKSLEICHPQERNIFNRIFGGFLMRKAYELAWATACSFGGSRPFVVAVDDIMFQKPVEVGSLLFLSSQVCFTQNNYIQVRVHSEVASLQEKQHTTTNVFHFTFMSEKEVPLVFPKTYGESMLYLDGQRHFNSMSGPATLRKDYLVEP</sequence>
<evidence type="ECO:0000250" key="1"/>
<evidence type="ECO:0000250" key="2">
    <source>
        <dbReference type="UniProtKB" id="Q9R0X4"/>
    </source>
</evidence>
<evidence type="ECO:0000255" key="3">
    <source>
        <dbReference type="PROSITE-ProRule" id="PRU01106"/>
    </source>
</evidence>
<evidence type="ECO:0000269" key="4">
    <source>
    </source>
</evidence>
<evidence type="ECO:0000303" key="5">
    <source>
    </source>
</evidence>
<evidence type="ECO:0000303" key="6">
    <source>
    </source>
</evidence>
<evidence type="ECO:0000303" key="7">
    <source>
    </source>
</evidence>
<evidence type="ECO:0000305" key="8"/>
<evidence type="ECO:0000312" key="9">
    <source>
        <dbReference type="HGNC" id="HGNC:17152"/>
    </source>
</evidence>
<evidence type="ECO:0007744" key="10">
    <source>
    </source>
</evidence>
<comment type="function">
    <text evidence="2">Mitochondrial acyl-CoA thioesterase. Catalyzes the hydrolysis of acyl-CoAs into free fatty acids and coenzyme A (CoA), regulating their respective intracellular levels. Regulates both mitochondrial lipid and amino acid metabolism.</text>
</comment>
<comment type="catalytic activity">
    <reaction evidence="2">
        <text>butanoyl-CoA + H2O = butanoate + CoA + H(+)</text>
        <dbReference type="Rhea" id="RHEA:40111"/>
        <dbReference type="ChEBI" id="CHEBI:15377"/>
        <dbReference type="ChEBI" id="CHEBI:15378"/>
        <dbReference type="ChEBI" id="CHEBI:17968"/>
        <dbReference type="ChEBI" id="CHEBI:57287"/>
        <dbReference type="ChEBI" id="CHEBI:57371"/>
    </reaction>
    <physiologicalReaction direction="left-to-right" evidence="2">
        <dbReference type="Rhea" id="RHEA:40112"/>
    </physiologicalReaction>
</comment>
<comment type="catalytic activity">
    <reaction evidence="2">
        <text>propanoyl-CoA + H2O = propanoate + CoA + H(+)</text>
        <dbReference type="Rhea" id="RHEA:40103"/>
        <dbReference type="ChEBI" id="CHEBI:15377"/>
        <dbReference type="ChEBI" id="CHEBI:15378"/>
        <dbReference type="ChEBI" id="CHEBI:17272"/>
        <dbReference type="ChEBI" id="CHEBI:57287"/>
        <dbReference type="ChEBI" id="CHEBI:57392"/>
    </reaction>
    <physiologicalReaction direction="left-to-right" evidence="2">
        <dbReference type="Rhea" id="RHEA:40104"/>
    </physiologicalReaction>
</comment>
<comment type="catalytic activity">
    <reaction evidence="2">
        <text>hexadecanoyl-CoA + H2O = hexadecanoate + CoA + H(+)</text>
        <dbReference type="Rhea" id="RHEA:16645"/>
        <dbReference type="ChEBI" id="CHEBI:7896"/>
        <dbReference type="ChEBI" id="CHEBI:15377"/>
        <dbReference type="ChEBI" id="CHEBI:15378"/>
        <dbReference type="ChEBI" id="CHEBI:57287"/>
        <dbReference type="ChEBI" id="CHEBI:57379"/>
        <dbReference type="EC" id="3.1.2.2"/>
    </reaction>
    <physiologicalReaction direction="left-to-right" evidence="2">
        <dbReference type="Rhea" id="RHEA:16646"/>
    </physiologicalReaction>
</comment>
<comment type="catalytic activity">
    <reaction evidence="2">
        <text>octanoyl-CoA + H2O = octanoate + CoA + H(+)</text>
        <dbReference type="Rhea" id="RHEA:30143"/>
        <dbReference type="ChEBI" id="CHEBI:15377"/>
        <dbReference type="ChEBI" id="CHEBI:15378"/>
        <dbReference type="ChEBI" id="CHEBI:25646"/>
        <dbReference type="ChEBI" id="CHEBI:57287"/>
        <dbReference type="ChEBI" id="CHEBI:57386"/>
    </reaction>
    <physiologicalReaction direction="left-to-right" evidence="2">
        <dbReference type="Rhea" id="RHEA:30144"/>
    </physiologicalReaction>
</comment>
<comment type="catalytic activity">
    <reaction evidence="2">
        <text>decanoyl-CoA + H2O = decanoate + CoA + H(+)</text>
        <dbReference type="Rhea" id="RHEA:40059"/>
        <dbReference type="ChEBI" id="CHEBI:15377"/>
        <dbReference type="ChEBI" id="CHEBI:15378"/>
        <dbReference type="ChEBI" id="CHEBI:27689"/>
        <dbReference type="ChEBI" id="CHEBI:57287"/>
        <dbReference type="ChEBI" id="CHEBI:61430"/>
    </reaction>
    <physiologicalReaction direction="left-to-right" evidence="2">
        <dbReference type="Rhea" id="RHEA:40060"/>
    </physiologicalReaction>
</comment>
<comment type="catalytic activity">
    <reaction evidence="2">
        <text>tetradecanoyl-CoA + H2O = tetradecanoate + CoA + H(+)</text>
        <dbReference type="Rhea" id="RHEA:40119"/>
        <dbReference type="ChEBI" id="CHEBI:15377"/>
        <dbReference type="ChEBI" id="CHEBI:15378"/>
        <dbReference type="ChEBI" id="CHEBI:30807"/>
        <dbReference type="ChEBI" id="CHEBI:57287"/>
        <dbReference type="ChEBI" id="CHEBI:57385"/>
    </reaction>
    <physiologicalReaction direction="left-to-right" evidence="2">
        <dbReference type="Rhea" id="RHEA:40120"/>
    </physiologicalReaction>
</comment>
<comment type="catalytic activity">
    <reaction evidence="2">
        <text>4,8-dimethylnonanoyl-CoA + H2O = 4,8-dimethylnonanoate + CoA + H(+)</text>
        <dbReference type="Rhea" id="RHEA:40223"/>
        <dbReference type="ChEBI" id="CHEBI:15377"/>
        <dbReference type="ChEBI" id="CHEBI:15378"/>
        <dbReference type="ChEBI" id="CHEBI:57287"/>
        <dbReference type="ChEBI" id="CHEBI:77061"/>
        <dbReference type="ChEBI" id="CHEBI:77063"/>
    </reaction>
    <physiologicalReaction direction="left-to-right" evidence="2">
        <dbReference type="Rhea" id="RHEA:40224"/>
    </physiologicalReaction>
</comment>
<comment type="catalytic activity">
    <reaction evidence="2">
        <text>3-methylbutanoyl-CoA + H2O = 3-methylbutanoate + CoA + H(+)</text>
        <dbReference type="Rhea" id="RHEA:66984"/>
        <dbReference type="ChEBI" id="CHEBI:15377"/>
        <dbReference type="ChEBI" id="CHEBI:15378"/>
        <dbReference type="ChEBI" id="CHEBI:48942"/>
        <dbReference type="ChEBI" id="CHEBI:57287"/>
        <dbReference type="ChEBI" id="CHEBI:57345"/>
    </reaction>
    <physiologicalReaction direction="left-to-right" evidence="2">
        <dbReference type="Rhea" id="RHEA:66985"/>
    </physiologicalReaction>
</comment>
<comment type="catalytic activity">
    <reaction evidence="2">
        <text>2-methylpropanoyl-CoA + H2O = 2-methylpropanoate + CoA + H(+)</text>
        <dbReference type="Rhea" id="RHEA:40799"/>
        <dbReference type="ChEBI" id="CHEBI:15377"/>
        <dbReference type="ChEBI" id="CHEBI:15378"/>
        <dbReference type="ChEBI" id="CHEBI:48944"/>
        <dbReference type="ChEBI" id="CHEBI:57287"/>
        <dbReference type="ChEBI" id="CHEBI:57338"/>
    </reaction>
    <physiologicalReaction direction="left-to-right" evidence="2">
        <dbReference type="Rhea" id="RHEA:40800"/>
    </physiologicalReaction>
</comment>
<comment type="activity regulation">
    <text evidence="2">Strongly inhibited by NADH and CoA.</text>
</comment>
<comment type="pathway">
    <text evidence="2">Lipid metabolism; fatty acid metabolism.</text>
</comment>
<comment type="subunit">
    <text evidence="1">Interacts with NYAP1, NYAP2 and MYO16.</text>
</comment>
<comment type="subcellular location">
    <subcellularLocation>
        <location evidence="2">Mitochondrion</location>
    </subcellularLocation>
    <subcellularLocation>
        <location evidence="2">Mitochondrion matrix</location>
    </subcellularLocation>
    <subcellularLocation>
        <location evidence="2">Mitochondrion inner membrane</location>
    </subcellularLocation>
</comment>
<comment type="alternative products">
    <event type="alternative splicing"/>
    <isoform>
        <id>Q9Y305-1</id>
        <name>1</name>
        <sequence type="displayed"/>
    </isoform>
    <isoform>
        <id>Q9Y305-2</id>
        <name>2</name>
        <sequence type="described" ref="VSP_036419"/>
    </isoform>
    <isoform>
        <id>Q9Y305-3</id>
        <name>3</name>
        <sequence type="described" ref="VSP_036420"/>
    </isoform>
    <isoform>
        <id>Q9Y305-4</id>
        <name>4</name>
        <sequence type="described" ref="VSP_041093"/>
    </isoform>
</comment>
<comment type="similarity">
    <text evidence="8">Belongs to the acyl coenzyme A hydrolase family.</text>
</comment>
<dbReference type="EC" id="3.1.2.-" evidence="2"/>
<dbReference type="EC" id="3.1.2.2" evidence="2"/>
<dbReference type="EMBL" id="AF132950">
    <property type="protein sequence ID" value="AAD27725.1"/>
    <property type="molecule type" value="mRNA"/>
</dbReference>
<dbReference type="EMBL" id="AK024337">
    <property type="protein sequence ID" value="BAG51291.1"/>
    <property type="molecule type" value="mRNA"/>
</dbReference>
<dbReference type="EMBL" id="BX648512">
    <property type="status" value="NOT_ANNOTATED_CDS"/>
    <property type="molecule type" value="mRNA"/>
</dbReference>
<dbReference type="EMBL" id="AC093011">
    <property type="status" value="NOT_ANNOTATED_CDS"/>
    <property type="molecule type" value="Genomic_DNA"/>
</dbReference>
<dbReference type="EMBL" id="AC131011">
    <property type="status" value="NOT_ANNOTATED_CDS"/>
    <property type="molecule type" value="Genomic_DNA"/>
</dbReference>
<dbReference type="EMBL" id="CH471074">
    <property type="protein sequence ID" value="EAW98998.1"/>
    <property type="molecule type" value="Genomic_DNA"/>
</dbReference>
<dbReference type="EMBL" id="BC136671">
    <property type="protein sequence ID" value="AAI36672.1"/>
    <property type="molecule type" value="mRNA"/>
</dbReference>
<dbReference type="EMBL" id="BC144360">
    <property type="protein sequence ID" value="AAI44361.1"/>
    <property type="molecule type" value="mRNA"/>
</dbReference>
<dbReference type="CCDS" id="CCDS35216.1">
    <molecule id="Q9Y305-1"/>
</dbReference>
<dbReference type="CCDS" id="CCDS43924.1">
    <molecule id="Q9Y305-4"/>
</dbReference>
<dbReference type="CCDS" id="CCDS83460.1">
    <molecule id="Q9Y305-3"/>
</dbReference>
<dbReference type="RefSeq" id="NP_001028755.2">
    <molecule id="Q9Y305-1"/>
    <property type="nucleotide sequence ID" value="NM_001033583.3"/>
</dbReference>
<dbReference type="RefSeq" id="NP_001032248.1">
    <molecule id="Q9Y305-4"/>
    <property type="nucleotide sequence ID" value="NM_001037171.2"/>
</dbReference>
<dbReference type="RefSeq" id="NP_001317188.1">
    <molecule id="Q9Y305-3"/>
    <property type="nucleotide sequence ID" value="NM_001330259.2"/>
</dbReference>
<dbReference type="SMR" id="Q9Y305"/>
<dbReference type="BioGRID" id="117132">
    <property type="interactions" value="185"/>
</dbReference>
<dbReference type="FunCoup" id="Q9Y305">
    <property type="interactions" value="1310"/>
</dbReference>
<dbReference type="IntAct" id="Q9Y305">
    <property type="interactions" value="75"/>
</dbReference>
<dbReference type="MINT" id="Q9Y305"/>
<dbReference type="STRING" id="9606.ENSP00000368605"/>
<dbReference type="ChEMBL" id="CHEMBL4295987"/>
<dbReference type="GlyGen" id="Q9Y305">
    <property type="glycosylation" value="1 site, 1 O-linked glycan (1 site)"/>
</dbReference>
<dbReference type="iPTMnet" id="Q9Y305"/>
<dbReference type="PhosphoSitePlus" id="Q9Y305"/>
<dbReference type="SwissPalm" id="Q9Y305"/>
<dbReference type="BioMuta" id="ACOT9"/>
<dbReference type="DMDM" id="224471815"/>
<dbReference type="jPOST" id="Q9Y305"/>
<dbReference type="MassIVE" id="Q9Y305"/>
<dbReference type="PaxDb" id="9606-ENSP00000368605"/>
<dbReference type="PeptideAtlas" id="Q9Y305"/>
<dbReference type="ProteomicsDB" id="85953">
    <molecule id="Q9Y305-1"/>
</dbReference>
<dbReference type="ProteomicsDB" id="85954">
    <molecule id="Q9Y305-2"/>
</dbReference>
<dbReference type="ProteomicsDB" id="85955">
    <molecule id="Q9Y305-3"/>
</dbReference>
<dbReference type="ProteomicsDB" id="85956">
    <molecule id="Q9Y305-4"/>
</dbReference>
<dbReference type="Pumba" id="Q9Y305"/>
<dbReference type="Antibodypedia" id="24512">
    <property type="antibodies" value="257 antibodies from 31 providers"/>
</dbReference>
<dbReference type="DNASU" id="23597"/>
<dbReference type="Ensembl" id="ENST00000336430.11">
    <molecule id="Q9Y305-1"/>
    <property type="protein sequence ID" value="ENSP00000336580.7"/>
    <property type="gene ID" value="ENSG00000123130.17"/>
</dbReference>
<dbReference type="Ensembl" id="ENST00000379295.5">
    <molecule id="Q9Y305-3"/>
    <property type="protein sequence ID" value="ENSP00000368597.1"/>
    <property type="gene ID" value="ENSG00000123130.17"/>
</dbReference>
<dbReference type="Ensembl" id="ENST00000379303.10">
    <molecule id="Q9Y305-4"/>
    <property type="protein sequence ID" value="ENSP00000368605.5"/>
    <property type="gene ID" value="ENSG00000123130.17"/>
</dbReference>
<dbReference type="GeneID" id="23597"/>
<dbReference type="KEGG" id="hsa:23597"/>
<dbReference type="MANE-Select" id="ENST00000379303.10">
    <molecule id="Q9Y305-4"/>
    <property type="protein sequence ID" value="ENSP00000368605.5"/>
    <property type="RefSeq nucleotide sequence ID" value="NM_001037171.2"/>
    <property type="RefSeq protein sequence ID" value="NP_001032248.1"/>
</dbReference>
<dbReference type="UCSC" id="uc004dao.4">
    <molecule id="Q9Y305-1"/>
    <property type="organism name" value="human"/>
</dbReference>
<dbReference type="AGR" id="HGNC:17152"/>
<dbReference type="CTD" id="23597"/>
<dbReference type="DisGeNET" id="23597"/>
<dbReference type="GeneCards" id="ACOT9"/>
<dbReference type="HGNC" id="HGNC:17152">
    <property type="gene designation" value="ACOT9"/>
</dbReference>
<dbReference type="HPA" id="ENSG00000123130">
    <property type="expression patterns" value="Low tissue specificity"/>
</dbReference>
<dbReference type="MalaCards" id="ACOT9"/>
<dbReference type="MIM" id="300862">
    <property type="type" value="gene"/>
</dbReference>
<dbReference type="neXtProt" id="NX_Q9Y305"/>
<dbReference type="OpenTargets" id="ENSG00000123130"/>
<dbReference type="PharmGKB" id="PA142672656"/>
<dbReference type="VEuPathDB" id="HostDB:ENSG00000123130"/>
<dbReference type="eggNOG" id="KOG2763">
    <property type="taxonomic scope" value="Eukaryota"/>
</dbReference>
<dbReference type="GeneTree" id="ENSGT00390000005330"/>
<dbReference type="InParanoid" id="Q9Y305"/>
<dbReference type="OMA" id="QFNYTFL"/>
<dbReference type="OrthoDB" id="331699at2759"/>
<dbReference type="PAN-GO" id="Q9Y305">
    <property type="GO annotations" value="3 GO annotations based on evolutionary models"/>
</dbReference>
<dbReference type="PhylomeDB" id="Q9Y305"/>
<dbReference type="TreeFam" id="TF313352"/>
<dbReference type="BioCyc" id="MetaCyc:HS04631-MONOMER"/>
<dbReference type="PathwayCommons" id="Q9Y305"/>
<dbReference type="Reactome" id="R-HSA-77289">
    <property type="pathway name" value="Mitochondrial Fatty Acid Beta-Oxidation"/>
</dbReference>
<dbReference type="SignaLink" id="Q9Y305"/>
<dbReference type="UniPathway" id="UPA00199"/>
<dbReference type="BioGRID-ORCS" id="23597">
    <property type="hits" value="12 hits in 783 CRISPR screens"/>
</dbReference>
<dbReference type="ChiTaRS" id="ACOT9">
    <property type="organism name" value="human"/>
</dbReference>
<dbReference type="GenomeRNAi" id="23597"/>
<dbReference type="Pharos" id="Q9Y305">
    <property type="development level" value="Tbio"/>
</dbReference>
<dbReference type="PRO" id="PR:Q9Y305"/>
<dbReference type="Proteomes" id="UP000005640">
    <property type="component" value="Chromosome X"/>
</dbReference>
<dbReference type="RNAct" id="Q9Y305">
    <property type="molecule type" value="protein"/>
</dbReference>
<dbReference type="Bgee" id="ENSG00000123130">
    <property type="expression patterns" value="Expressed in secondary oocyte and 193 other cell types or tissues"/>
</dbReference>
<dbReference type="ExpressionAtlas" id="Q9Y305">
    <property type="expression patterns" value="baseline and differential"/>
</dbReference>
<dbReference type="GO" id="GO:0005743">
    <property type="term" value="C:mitochondrial inner membrane"/>
    <property type="evidence" value="ECO:0000250"/>
    <property type="project" value="UniProtKB"/>
</dbReference>
<dbReference type="GO" id="GO:0005759">
    <property type="term" value="C:mitochondrial matrix"/>
    <property type="evidence" value="ECO:0000250"/>
    <property type="project" value="UniProtKB"/>
</dbReference>
<dbReference type="GO" id="GO:0005739">
    <property type="term" value="C:mitochondrion"/>
    <property type="evidence" value="ECO:0006056"/>
    <property type="project" value="FlyBase"/>
</dbReference>
<dbReference type="GO" id="GO:0003986">
    <property type="term" value="F:acetyl-CoA hydrolase activity"/>
    <property type="evidence" value="ECO:0000250"/>
    <property type="project" value="HGNC-UCL"/>
</dbReference>
<dbReference type="GO" id="GO:0052689">
    <property type="term" value="F:carboxylic ester hydrolase activity"/>
    <property type="evidence" value="ECO:0007669"/>
    <property type="project" value="UniProtKB-KW"/>
</dbReference>
<dbReference type="GO" id="GO:0047617">
    <property type="term" value="F:fatty acyl-CoA hydrolase activity"/>
    <property type="evidence" value="ECO:0000250"/>
    <property type="project" value="UniProtKB"/>
</dbReference>
<dbReference type="GO" id="GO:0052816">
    <property type="term" value="F:long-chain fatty acyl-CoA hydrolase activity"/>
    <property type="evidence" value="ECO:0000250"/>
    <property type="project" value="UniProtKB"/>
</dbReference>
<dbReference type="GO" id="GO:0006637">
    <property type="term" value="P:acyl-CoA metabolic process"/>
    <property type="evidence" value="ECO:0000250"/>
    <property type="project" value="HGNC-UCL"/>
</dbReference>
<dbReference type="GO" id="GO:0001676">
    <property type="term" value="P:long-chain fatty acid metabolic process"/>
    <property type="evidence" value="ECO:0000250"/>
    <property type="project" value="UniProtKB"/>
</dbReference>
<dbReference type="GO" id="GO:0046459">
    <property type="term" value="P:short-chain fatty acid metabolic process"/>
    <property type="evidence" value="ECO:0000250"/>
    <property type="project" value="UniProtKB"/>
</dbReference>
<dbReference type="CDD" id="cd03442">
    <property type="entry name" value="BFIT_BACH"/>
    <property type="match status" value="2"/>
</dbReference>
<dbReference type="FunFam" id="3.10.129.10:FF:000012">
    <property type="entry name" value="Acyl-coenzyme A thioesterase 9, mitochondrial"/>
    <property type="match status" value="1"/>
</dbReference>
<dbReference type="FunFam" id="3.10.129.10:FF:000016">
    <property type="entry name" value="Acyl-coenzyme A thioesterase 9, mitochondrial"/>
    <property type="match status" value="1"/>
</dbReference>
<dbReference type="Gene3D" id="3.10.129.10">
    <property type="entry name" value="Hotdog Thioesterase"/>
    <property type="match status" value="2"/>
</dbReference>
<dbReference type="InterPro" id="IPR033120">
    <property type="entry name" value="HOTDOG_ACOT"/>
</dbReference>
<dbReference type="InterPro" id="IPR029069">
    <property type="entry name" value="HotDog_dom_sf"/>
</dbReference>
<dbReference type="InterPro" id="IPR006683">
    <property type="entry name" value="Thioestr_dom"/>
</dbReference>
<dbReference type="PANTHER" id="PTHR12655">
    <property type="entry name" value="ACYL-COA THIOESTERASE"/>
    <property type="match status" value="1"/>
</dbReference>
<dbReference type="PANTHER" id="PTHR12655:SF0">
    <property type="entry name" value="ACYL-COENZYME A THIOESTERASE 9, MITOCHONDRIAL"/>
    <property type="match status" value="1"/>
</dbReference>
<dbReference type="Pfam" id="PF03061">
    <property type="entry name" value="4HBT"/>
    <property type="match status" value="1"/>
</dbReference>
<dbReference type="SUPFAM" id="SSF54637">
    <property type="entry name" value="Thioesterase/thiol ester dehydrase-isomerase"/>
    <property type="match status" value="2"/>
</dbReference>
<dbReference type="PROSITE" id="PS51770">
    <property type="entry name" value="HOTDOG_ACOT"/>
    <property type="match status" value="2"/>
</dbReference>
<accession>Q9Y305</accession>
<accession>B3KNC9</accession>
<accession>B7ZM94</accession>
<gene>
    <name evidence="9" type="primary">ACOT9</name>
    <name type="ORF">CGI-16</name>
</gene>
<name>ACOT9_HUMAN</name>
<feature type="transit peptide" description="Mitochondrion" evidence="1">
    <location>
        <begin position="1"/>
        <end position="21"/>
    </location>
</feature>
<feature type="chain" id="PRO_0000053812" description="Acyl-coenzyme A thioesterase 9, mitochondrial">
    <location>
        <begin position="22"/>
        <end position="439"/>
    </location>
</feature>
<feature type="domain" description="HotDog ACOT-type 1" evidence="3">
    <location>
        <begin position="84"/>
        <end position="209"/>
    </location>
</feature>
<feature type="domain" description="HotDog ACOT-type 2" evidence="3">
    <location>
        <begin position="289"/>
        <end position="401"/>
    </location>
</feature>
<feature type="modified residue" description="N6-acetyllysine" evidence="10">
    <location>
        <position position="103"/>
    </location>
</feature>
<feature type="splice variant" id="VSP_036420" description="In isoform 3." evidence="6">
    <location>
        <begin position="1"/>
        <end position="60"/>
    </location>
</feature>
<feature type="splice variant" id="VSP_036419" description="In isoform 2." evidence="5">
    <original>ALRLCALGKGQLTPGRGLTQGPQNPKKQGIFHIHE</original>
    <variation>PC</variation>
    <location>
        <begin position="5"/>
        <end position="39"/>
    </location>
</feature>
<feature type="splice variant" id="VSP_041093" description="In isoform 4." evidence="7">
    <original>E</original>
    <variation>EACSSIHVNH</variation>
    <location>
        <position position="39"/>
    </location>
</feature>
<feature type="sequence variant" id="VAR_062668" description="In a pancreatic ductal adenocarcinoma sample; somatic mutation." evidence="4">
    <original>N</original>
    <variation>H</variation>
    <location>
        <position position="305"/>
    </location>
</feature>
<feature type="sequence conflict" description="In Ref. 2; BAG51291." evidence="8" ref="2">
    <original>L</original>
    <variation>S</variation>
    <location>
        <position position="188"/>
    </location>
</feature>
<proteinExistence type="evidence at protein level"/>
<reference key="1">
    <citation type="journal article" date="2000" name="Genome Res.">
        <title>Identification of novel human genes evolutionarily conserved in Caenorhabditis elegans by comparative proteomics.</title>
        <authorList>
            <person name="Lai C.-H."/>
            <person name="Chou C.-Y."/>
            <person name="Ch'ang L.-Y."/>
            <person name="Liu C.-S."/>
            <person name="Lin W.-C."/>
        </authorList>
    </citation>
    <scope>NUCLEOTIDE SEQUENCE [LARGE SCALE MRNA] (ISOFORM 2)</scope>
</reference>
<reference key="2">
    <citation type="journal article" date="2004" name="Nat. Genet.">
        <title>Complete sequencing and characterization of 21,243 full-length human cDNAs.</title>
        <authorList>
            <person name="Ota T."/>
            <person name="Suzuki Y."/>
            <person name="Nishikawa T."/>
            <person name="Otsuki T."/>
            <person name="Sugiyama T."/>
            <person name="Irie R."/>
            <person name="Wakamatsu A."/>
            <person name="Hayashi K."/>
            <person name="Sato H."/>
            <person name="Nagai K."/>
            <person name="Kimura K."/>
            <person name="Makita H."/>
            <person name="Sekine M."/>
            <person name="Obayashi M."/>
            <person name="Nishi T."/>
            <person name="Shibahara T."/>
            <person name="Tanaka T."/>
            <person name="Ishii S."/>
            <person name="Yamamoto J."/>
            <person name="Saito K."/>
            <person name="Kawai Y."/>
            <person name="Isono Y."/>
            <person name="Nakamura Y."/>
            <person name="Nagahari K."/>
            <person name="Murakami K."/>
            <person name="Yasuda T."/>
            <person name="Iwayanagi T."/>
            <person name="Wagatsuma M."/>
            <person name="Shiratori A."/>
            <person name="Sudo H."/>
            <person name="Hosoiri T."/>
            <person name="Kaku Y."/>
            <person name="Kodaira H."/>
            <person name="Kondo H."/>
            <person name="Sugawara M."/>
            <person name="Takahashi M."/>
            <person name="Kanda K."/>
            <person name="Yokoi T."/>
            <person name="Furuya T."/>
            <person name="Kikkawa E."/>
            <person name="Omura Y."/>
            <person name="Abe K."/>
            <person name="Kamihara K."/>
            <person name="Katsuta N."/>
            <person name="Sato K."/>
            <person name="Tanikawa M."/>
            <person name="Yamazaki M."/>
            <person name="Ninomiya K."/>
            <person name="Ishibashi T."/>
            <person name="Yamashita H."/>
            <person name="Murakawa K."/>
            <person name="Fujimori K."/>
            <person name="Tanai H."/>
            <person name="Kimata M."/>
            <person name="Watanabe M."/>
            <person name="Hiraoka S."/>
            <person name="Chiba Y."/>
            <person name="Ishida S."/>
            <person name="Ono Y."/>
            <person name="Takiguchi S."/>
            <person name="Watanabe S."/>
            <person name="Yosida M."/>
            <person name="Hotuta T."/>
            <person name="Kusano J."/>
            <person name="Kanehori K."/>
            <person name="Takahashi-Fujii A."/>
            <person name="Hara H."/>
            <person name="Tanase T.-O."/>
            <person name="Nomura Y."/>
            <person name="Togiya S."/>
            <person name="Komai F."/>
            <person name="Hara R."/>
            <person name="Takeuchi K."/>
            <person name="Arita M."/>
            <person name="Imose N."/>
            <person name="Musashino K."/>
            <person name="Yuuki H."/>
            <person name="Oshima A."/>
            <person name="Sasaki N."/>
            <person name="Aotsuka S."/>
            <person name="Yoshikawa Y."/>
            <person name="Matsunawa H."/>
            <person name="Ichihara T."/>
            <person name="Shiohata N."/>
            <person name="Sano S."/>
            <person name="Moriya S."/>
            <person name="Momiyama H."/>
            <person name="Satoh N."/>
            <person name="Takami S."/>
            <person name="Terashima Y."/>
            <person name="Suzuki O."/>
            <person name="Nakagawa S."/>
            <person name="Senoh A."/>
            <person name="Mizoguchi H."/>
            <person name="Goto Y."/>
            <person name="Shimizu F."/>
            <person name="Wakebe H."/>
            <person name="Hishigaki H."/>
            <person name="Watanabe T."/>
            <person name="Sugiyama A."/>
            <person name="Takemoto M."/>
            <person name="Kawakami B."/>
            <person name="Yamazaki M."/>
            <person name="Watanabe K."/>
            <person name="Kumagai A."/>
            <person name="Itakura S."/>
            <person name="Fukuzumi Y."/>
            <person name="Fujimori Y."/>
            <person name="Komiyama M."/>
            <person name="Tashiro H."/>
            <person name="Tanigami A."/>
            <person name="Fujiwara T."/>
            <person name="Ono T."/>
            <person name="Yamada K."/>
            <person name="Fujii Y."/>
            <person name="Ozaki K."/>
            <person name="Hirao M."/>
            <person name="Ohmori Y."/>
            <person name="Kawabata A."/>
            <person name="Hikiji T."/>
            <person name="Kobatake N."/>
            <person name="Inagaki H."/>
            <person name="Ikema Y."/>
            <person name="Okamoto S."/>
            <person name="Okitani R."/>
            <person name="Kawakami T."/>
            <person name="Noguchi S."/>
            <person name="Itoh T."/>
            <person name="Shigeta K."/>
            <person name="Senba T."/>
            <person name="Matsumura K."/>
            <person name="Nakajima Y."/>
            <person name="Mizuno T."/>
            <person name="Morinaga M."/>
            <person name="Sasaki M."/>
            <person name="Togashi T."/>
            <person name="Oyama M."/>
            <person name="Hata H."/>
            <person name="Watanabe M."/>
            <person name="Komatsu T."/>
            <person name="Mizushima-Sugano J."/>
            <person name="Satoh T."/>
            <person name="Shirai Y."/>
            <person name="Takahashi Y."/>
            <person name="Nakagawa K."/>
            <person name="Okumura K."/>
            <person name="Nagase T."/>
            <person name="Nomura N."/>
            <person name="Kikuchi H."/>
            <person name="Masuho Y."/>
            <person name="Yamashita R."/>
            <person name="Nakai K."/>
            <person name="Yada T."/>
            <person name="Nakamura Y."/>
            <person name="Ohara O."/>
            <person name="Isogai T."/>
            <person name="Sugano S."/>
        </authorList>
    </citation>
    <scope>NUCLEOTIDE SEQUENCE [LARGE SCALE MRNA] (ISOFORM 3)</scope>
    <source>
        <tissue>Placenta</tissue>
    </source>
</reference>
<reference key="3">
    <citation type="journal article" date="2007" name="BMC Genomics">
        <title>The full-ORF clone resource of the German cDNA consortium.</title>
        <authorList>
            <person name="Bechtel S."/>
            <person name="Rosenfelder H."/>
            <person name="Duda A."/>
            <person name="Schmidt C.P."/>
            <person name="Ernst U."/>
            <person name="Wellenreuther R."/>
            <person name="Mehrle A."/>
            <person name="Schuster C."/>
            <person name="Bahr A."/>
            <person name="Bloecker H."/>
            <person name="Heubner D."/>
            <person name="Hoerlein A."/>
            <person name="Michel G."/>
            <person name="Wedler H."/>
            <person name="Koehrer K."/>
            <person name="Ottenwaelder B."/>
            <person name="Poustka A."/>
            <person name="Wiemann S."/>
            <person name="Schupp I."/>
        </authorList>
    </citation>
    <scope>NUCLEOTIDE SEQUENCE [LARGE SCALE MRNA] (ISOFORM 4)</scope>
</reference>
<reference key="4">
    <citation type="journal article" date="2005" name="Nature">
        <title>The DNA sequence of the human X chromosome.</title>
        <authorList>
            <person name="Ross M.T."/>
            <person name="Grafham D.V."/>
            <person name="Coffey A.J."/>
            <person name="Scherer S."/>
            <person name="McLay K."/>
            <person name="Muzny D."/>
            <person name="Platzer M."/>
            <person name="Howell G.R."/>
            <person name="Burrows C."/>
            <person name="Bird C.P."/>
            <person name="Frankish A."/>
            <person name="Lovell F.L."/>
            <person name="Howe K.L."/>
            <person name="Ashurst J.L."/>
            <person name="Fulton R.S."/>
            <person name="Sudbrak R."/>
            <person name="Wen G."/>
            <person name="Jones M.C."/>
            <person name="Hurles M.E."/>
            <person name="Andrews T.D."/>
            <person name="Scott C.E."/>
            <person name="Searle S."/>
            <person name="Ramser J."/>
            <person name="Whittaker A."/>
            <person name="Deadman R."/>
            <person name="Carter N.P."/>
            <person name="Hunt S.E."/>
            <person name="Chen R."/>
            <person name="Cree A."/>
            <person name="Gunaratne P."/>
            <person name="Havlak P."/>
            <person name="Hodgson A."/>
            <person name="Metzker M.L."/>
            <person name="Richards S."/>
            <person name="Scott G."/>
            <person name="Steffen D."/>
            <person name="Sodergren E."/>
            <person name="Wheeler D.A."/>
            <person name="Worley K.C."/>
            <person name="Ainscough R."/>
            <person name="Ambrose K.D."/>
            <person name="Ansari-Lari M.A."/>
            <person name="Aradhya S."/>
            <person name="Ashwell R.I."/>
            <person name="Babbage A.K."/>
            <person name="Bagguley C.L."/>
            <person name="Ballabio A."/>
            <person name="Banerjee R."/>
            <person name="Barker G.E."/>
            <person name="Barlow K.F."/>
            <person name="Barrett I.P."/>
            <person name="Bates K.N."/>
            <person name="Beare D.M."/>
            <person name="Beasley H."/>
            <person name="Beasley O."/>
            <person name="Beck A."/>
            <person name="Bethel G."/>
            <person name="Blechschmidt K."/>
            <person name="Brady N."/>
            <person name="Bray-Allen S."/>
            <person name="Bridgeman A.M."/>
            <person name="Brown A.J."/>
            <person name="Brown M.J."/>
            <person name="Bonnin D."/>
            <person name="Bruford E.A."/>
            <person name="Buhay C."/>
            <person name="Burch P."/>
            <person name="Burford D."/>
            <person name="Burgess J."/>
            <person name="Burrill W."/>
            <person name="Burton J."/>
            <person name="Bye J.M."/>
            <person name="Carder C."/>
            <person name="Carrel L."/>
            <person name="Chako J."/>
            <person name="Chapman J.C."/>
            <person name="Chavez D."/>
            <person name="Chen E."/>
            <person name="Chen G."/>
            <person name="Chen Y."/>
            <person name="Chen Z."/>
            <person name="Chinault C."/>
            <person name="Ciccodicola A."/>
            <person name="Clark S.Y."/>
            <person name="Clarke G."/>
            <person name="Clee C.M."/>
            <person name="Clegg S."/>
            <person name="Clerc-Blankenburg K."/>
            <person name="Clifford K."/>
            <person name="Cobley V."/>
            <person name="Cole C.G."/>
            <person name="Conquer J.S."/>
            <person name="Corby N."/>
            <person name="Connor R.E."/>
            <person name="David R."/>
            <person name="Davies J."/>
            <person name="Davis C."/>
            <person name="Davis J."/>
            <person name="Delgado O."/>
            <person name="Deshazo D."/>
            <person name="Dhami P."/>
            <person name="Ding Y."/>
            <person name="Dinh H."/>
            <person name="Dodsworth S."/>
            <person name="Draper H."/>
            <person name="Dugan-Rocha S."/>
            <person name="Dunham A."/>
            <person name="Dunn M."/>
            <person name="Durbin K.J."/>
            <person name="Dutta I."/>
            <person name="Eades T."/>
            <person name="Ellwood M."/>
            <person name="Emery-Cohen A."/>
            <person name="Errington H."/>
            <person name="Evans K.L."/>
            <person name="Faulkner L."/>
            <person name="Francis F."/>
            <person name="Frankland J."/>
            <person name="Fraser A.E."/>
            <person name="Galgoczy P."/>
            <person name="Gilbert J."/>
            <person name="Gill R."/>
            <person name="Gloeckner G."/>
            <person name="Gregory S.G."/>
            <person name="Gribble S."/>
            <person name="Griffiths C."/>
            <person name="Grocock R."/>
            <person name="Gu Y."/>
            <person name="Gwilliam R."/>
            <person name="Hamilton C."/>
            <person name="Hart E.A."/>
            <person name="Hawes A."/>
            <person name="Heath P.D."/>
            <person name="Heitmann K."/>
            <person name="Hennig S."/>
            <person name="Hernandez J."/>
            <person name="Hinzmann B."/>
            <person name="Ho S."/>
            <person name="Hoffs M."/>
            <person name="Howden P.J."/>
            <person name="Huckle E.J."/>
            <person name="Hume J."/>
            <person name="Hunt P.J."/>
            <person name="Hunt A.R."/>
            <person name="Isherwood J."/>
            <person name="Jacob L."/>
            <person name="Johnson D."/>
            <person name="Jones S."/>
            <person name="de Jong P.J."/>
            <person name="Joseph S.S."/>
            <person name="Keenan S."/>
            <person name="Kelly S."/>
            <person name="Kershaw J.K."/>
            <person name="Khan Z."/>
            <person name="Kioschis P."/>
            <person name="Klages S."/>
            <person name="Knights A.J."/>
            <person name="Kosiura A."/>
            <person name="Kovar-Smith C."/>
            <person name="Laird G.K."/>
            <person name="Langford C."/>
            <person name="Lawlor S."/>
            <person name="Leversha M."/>
            <person name="Lewis L."/>
            <person name="Liu W."/>
            <person name="Lloyd C."/>
            <person name="Lloyd D.M."/>
            <person name="Loulseged H."/>
            <person name="Loveland J.E."/>
            <person name="Lovell J.D."/>
            <person name="Lozado R."/>
            <person name="Lu J."/>
            <person name="Lyne R."/>
            <person name="Ma J."/>
            <person name="Maheshwari M."/>
            <person name="Matthews L.H."/>
            <person name="McDowall J."/>
            <person name="McLaren S."/>
            <person name="McMurray A."/>
            <person name="Meidl P."/>
            <person name="Meitinger T."/>
            <person name="Milne S."/>
            <person name="Miner G."/>
            <person name="Mistry S.L."/>
            <person name="Morgan M."/>
            <person name="Morris S."/>
            <person name="Mueller I."/>
            <person name="Mullikin J.C."/>
            <person name="Nguyen N."/>
            <person name="Nordsiek G."/>
            <person name="Nyakatura G."/>
            <person name="O'dell C.N."/>
            <person name="Okwuonu G."/>
            <person name="Palmer S."/>
            <person name="Pandian R."/>
            <person name="Parker D."/>
            <person name="Parrish J."/>
            <person name="Pasternak S."/>
            <person name="Patel D."/>
            <person name="Pearce A.V."/>
            <person name="Pearson D.M."/>
            <person name="Pelan S.E."/>
            <person name="Perez L."/>
            <person name="Porter K.M."/>
            <person name="Ramsey Y."/>
            <person name="Reichwald K."/>
            <person name="Rhodes S."/>
            <person name="Ridler K.A."/>
            <person name="Schlessinger D."/>
            <person name="Schueler M.G."/>
            <person name="Sehra H.K."/>
            <person name="Shaw-Smith C."/>
            <person name="Shen H."/>
            <person name="Sheridan E.M."/>
            <person name="Shownkeen R."/>
            <person name="Skuce C.D."/>
            <person name="Smith M.L."/>
            <person name="Sotheran E.C."/>
            <person name="Steingruber H.E."/>
            <person name="Steward C.A."/>
            <person name="Storey R."/>
            <person name="Swann R.M."/>
            <person name="Swarbreck D."/>
            <person name="Tabor P.E."/>
            <person name="Taudien S."/>
            <person name="Taylor T."/>
            <person name="Teague B."/>
            <person name="Thomas K."/>
            <person name="Thorpe A."/>
            <person name="Timms K."/>
            <person name="Tracey A."/>
            <person name="Trevanion S."/>
            <person name="Tromans A.C."/>
            <person name="d'Urso M."/>
            <person name="Verduzco D."/>
            <person name="Villasana D."/>
            <person name="Waldron L."/>
            <person name="Wall M."/>
            <person name="Wang Q."/>
            <person name="Warren J."/>
            <person name="Warry G.L."/>
            <person name="Wei X."/>
            <person name="West A."/>
            <person name="Whitehead S.L."/>
            <person name="Whiteley M.N."/>
            <person name="Wilkinson J.E."/>
            <person name="Willey D.L."/>
            <person name="Williams G."/>
            <person name="Williams L."/>
            <person name="Williamson A."/>
            <person name="Williamson H."/>
            <person name="Wilming L."/>
            <person name="Woodmansey R.L."/>
            <person name="Wray P.W."/>
            <person name="Yen J."/>
            <person name="Zhang J."/>
            <person name="Zhou J."/>
            <person name="Zoghbi H."/>
            <person name="Zorilla S."/>
            <person name="Buck D."/>
            <person name="Reinhardt R."/>
            <person name="Poustka A."/>
            <person name="Rosenthal A."/>
            <person name="Lehrach H."/>
            <person name="Meindl A."/>
            <person name="Minx P.J."/>
            <person name="Hillier L.W."/>
            <person name="Willard H.F."/>
            <person name="Wilson R.K."/>
            <person name="Waterston R.H."/>
            <person name="Rice C.M."/>
            <person name="Vaudin M."/>
            <person name="Coulson A."/>
            <person name="Nelson D.L."/>
            <person name="Weinstock G."/>
            <person name="Sulston J.E."/>
            <person name="Durbin R.M."/>
            <person name="Hubbard T."/>
            <person name="Gibbs R.A."/>
            <person name="Beck S."/>
            <person name="Rogers J."/>
            <person name="Bentley D.R."/>
        </authorList>
    </citation>
    <scope>NUCLEOTIDE SEQUENCE [LARGE SCALE GENOMIC DNA]</scope>
</reference>
<reference key="5">
    <citation type="submission" date="2005-07" db="EMBL/GenBank/DDBJ databases">
        <authorList>
            <person name="Mural R.J."/>
            <person name="Istrail S."/>
            <person name="Sutton G.G."/>
            <person name="Florea L."/>
            <person name="Halpern A.L."/>
            <person name="Mobarry C.M."/>
            <person name="Lippert R."/>
            <person name="Walenz B."/>
            <person name="Shatkay H."/>
            <person name="Dew I."/>
            <person name="Miller J.R."/>
            <person name="Flanigan M.J."/>
            <person name="Edwards N.J."/>
            <person name="Bolanos R."/>
            <person name="Fasulo D."/>
            <person name="Halldorsson B.V."/>
            <person name="Hannenhalli S."/>
            <person name="Turner R."/>
            <person name="Yooseph S."/>
            <person name="Lu F."/>
            <person name="Nusskern D.R."/>
            <person name="Shue B.C."/>
            <person name="Zheng X.H."/>
            <person name="Zhong F."/>
            <person name="Delcher A.L."/>
            <person name="Huson D.H."/>
            <person name="Kravitz S.A."/>
            <person name="Mouchard L."/>
            <person name="Reinert K."/>
            <person name="Remington K.A."/>
            <person name="Clark A.G."/>
            <person name="Waterman M.S."/>
            <person name="Eichler E.E."/>
            <person name="Adams M.D."/>
            <person name="Hunkapiller M.W."/>
            <person name="Myers E.W."/>
            <person name="Venter J.C."/>
        </authorList>
    </citation>
    <scope>NUCLEOTIDE SEQUENCE [LARGE SCALE GENOMIC DNA]</scope>
</reference>
<reference key="6">
    <citation type="journal article" date="2004" name="Genome Res.">
        <title>The status, quality, and expansion of the NIH full-length cDNA project: the Mammalian Gene Collection (MGC).</title>
        <authorList>
            <consortium name="The MGC Project Team"/>
        </authorList>
    </citation>
    <scope>NUCLEOTIDE SEQUENCE [LARGE SCALE MRNA] (ISOFORM 1)</scope>
    <source>
        <tissue>Brain</tissue>
        <tissue>Testis</tissue>
    </source>
</reference>
<reference key="7">
    <citation type="journal article" date="2009" name="Science">
        <title>Lysine acetylation targets protein complexes and co-regulates major cellular functions.</title>
        <authorList>
            <person name="Choudhary C."/>
            <person name="Kumar C."/>
            <person name="Gnad F."/>
            <person name="Nielsen M.L."/>
            <person name="Rehman M."/>
            <person name="Walther T.C."/>
            <person name="Olsen J.V."/>
            <person name="Mann M."/>
        </authorList>
    </citation>
    <scope>ACETYLATION [LARGE SCALE ANALYSIS] AT LYS-103</scope>
    <scope>IDENTIFICATION BY MASS SPECTROMETRY [LARGE SCALE ANALYSIS]</scope>
</reference>
<reference key="8">
    <citation type="journal article" date="2011" name="BMC Syst. Biol.">
        <title>Initial characterization of the human central proteome.</title>
        <authorList>
            <person name="Burkard T.R."/>
            <person name="Planyavsky M."/>
            <person name="Kaupe I."/>
            <person name="Breitwieser F.P."/>
            <person name="Buerckstuemmer T."/>
            <person name="Bennett K.L."/>
            <person name="Superti-Furga G."/>
            <person name="Colinge J."/>
        </authorList>
    </citation>
    <scope>IDENTIFICATION BY MASS SPECTROMETRY [LARGE SCALE ANALYSIS]</scope>
</reference>
<reference key="9">
    <citation type="journal article" date="2015" name="Proteomics">
        <title>N-terminome analysis of the human mitochondrial proteome.</title>
        <authorList>
            <person name="Vaca Jacome A.S."/>
            <person name="Rabilloud T."/>
            <person name="Schaeffer-Reiss C."/>
            <person name="Rompais M."/>
            <person name="Ayoub D."/>
            <person name="Lane L."/>
            <person name="Bairoch A."/>
            <person name="Van Dorsselaer A."/>
            <person name="Carapito C."/>
        </authorList>
    </citation>
    <scope>IDENTIFICATION BY MASS SPECTROMETRY [LARGE SCALE ANALYSIS]</scope>
</reference>
<reference key="10">
    <citation type="journal article" date="2008" name="Science">
        <title>Core signaling pathways in human pancreatic cancers revealed by global genomic analyses.</title>
        <authorList>
            <person name="Jones S."/>
            <person name="Zhang X."/>
            <person name="Parsons D.W."/>
            <person name="Lin J.C."/>
            <person name="Leary R.J."/>
            <person name="Angenendt P."/>
            <person name="Mankoo P."/>
            <person name="Carter H."/>
            <person name="Kamiyama H."/>
            <person name="Jimeno A."/>
            <person name="Hong S.M."/>
            <person name="Fu B."/>
            <person name="Lin M.T."/>
            <person name="Calhoun E.S."/>
            <person name="Kamiyama M."/>
            <person name="Walter K."/>
            <person name="Nikolskaya T."/>
            <person name="Nikolsky Y."/>
            <person name="Hartigan J."/>
            <person name="Smith D.R."/>
            <person name="Hidalgo M."/>
            <person name="Leach S.D."/>
            <person name="Klein A.P."/>
            <person name="Jaffee E.M."/>
            <person name="Goggins M."/>
            <person name="Maitra A."/>
            <person name="Iacobuzio-Donahue C."/>
            <person name="Eshleman J.R."/>
            <person name="Kern S.E."/>
            <person name="Hruban R.H."/>
            <person name="Karchin R."/>
            <person name="Papadopoulos N."/>
            <person name="Parmigiani G."/>
            <person name="Vogelstein B."/>
            <person name="Velculescu V.E."/>
            <person name="Kinzler K.W."/>
        </authorList>
    </citation>
    <scope>VARIANT [LARGE SCALE ANALYSIS] HIS-305</scope>
</reference>
<organism>
    <name type="scientific">Homo sapiens</name>
    <name type="common">Human</name>
    <dbReference type="NCBI Taxonomy" id="9606"/>
    <lineage>
        <taxon>Eukaryota</taxon>
        <taxon>Metazoa</taxon>
        <taxon>Chordata</taxon>
        <taxon>Craniata</taxon>
        <taxon>Vertebrata</taxon>
        <taxon>Euteleostomi</taxon>
        <taxon>Mammalia</taxon>
        <taxon>Eutheria</taxon>
        <taxon>Euarchontoglires</taxon>
        <taxon>Primates</taxon>
        <taxon>Haplorrhini</taxon>
        <taxon>Catarrhini</taxon>
        <taxon>Hominidae</taxon>
        <taxon>Homo</taxon>
    </lineage>
</organism>